<feature type="chain" id="PRO_0000365401" description="Eukaryotic translation initiation factor 3 subunit G">
    <location>
        <begin position="1"/>
        <end position="294"/>
    </location>
</feature>
<feature type="domain" description="RRM" evidence="1">
    <location>
        <begin position="212"/>
        <end position="290"/>
    </location>
</feature>
<feature type="region of interest" description="Disordered" evidence="2">
    <location>
        <begin position="1"/>
        <end position="43"/>
    </location>
</feature>
<feature type="region of interest" description="Disordered" evidence="2">
    <location>
        <begin position="160"/>
        <end position="211"/>
    </location>
</feature>
<feature type="compositionally biased region" description="Basic and acidic residues" evidence="2">
    <location>
        <begin position="194"/>
        <end position="211"/>
    </location>
</feature>
<accession>A7SKE9</accession>
<reference key="1">
    <citation type="journal article" date="2007" name="Science">
        <title>Sea anemone genome reveals ancestral eumetazoan gene repertoire and genomic organization.</title>
        <authorList>
            <person name="Putnam N.H."/>
            <person name="Srivastava M."/>
            <person name="Hellsten U."/>
            <person name="Dirks B."/>
            <person name="Chapman J."/>
            <person name="Salamov A."/>
            <person name="Terry A."/>
            <person name="Shapiro H."/>
            <person name="Lindquist E."/>
            <person name="Kapitonov V.V."/>
            <person name="Jurka J."/>
            <person name="Genikhovich G."/>
            <person name="Grigoriev I.V."/>
            <person name="Lucas S.M."/>
            <person name="Steele R.E."/>
            <person name="Finnerty J.R."/>
            <person name="Technau U."/>
            <person name="Martindale M.Q."/>
            <person name="Rokhsar D.S."/>
        </authorList>
    </citation>
    <scope>NUCLEOTIDE SEQUENCE [LARGE SCALE GENOMIC DNA]</scope>
    <source>
        <strain>CH2 X CH6</strain>
    </source>
</reference>
<gene>
    <name type="ORF">v1g171563</name>
</gene>
<comment type="function">
    <text evidence="1">RNA-binding component of the eukaryotic translation initiation factor 3 (eIF-3) complex, which is involved in protein synthesis of a specialized repertoire of mRNAs and, together with other initiation factors, stimulates binding of mRNA and methionyl-tRNAi to the 40S ribosome. The eIF-3 complex specifically targets and initiates translation of a subset of mRNAs involved in cell proliferation. This subunit can bind 18S rRNA.</text>
</comment>
<comment type="subunit">
    <text evidence="1">Component of the eukaryotic translation initiation factor 3 (eIF-3) complex.</text>
</comment>
<comment type="subcellular location">
    <subcellularLocation>
        <location evidence="1">Cytoplasm</location>
    </subcellularLocation>
</comment>
<comment type="similarity">
    <text evidence="1">Belongs to the eIF-3 subunit G family.</text>
</comment>
<name>EIF3G_NEMVE</name>
<dbReference type="EMBL" id="DS469686">
    <property type="protein sequence ID" value="EDO35846.1"/>
    <property type="molecule type" value="Genomic_DNA"/>
</dbReference>
<dbReference type="RefSeq" id="XP_001627909.1">
    <property type="nucleotide sequence ID" value="XM_001627859.1"/>
</dbReference>
<dbReference type="SMR" id="A7SKE9"/>
<dbReference type="STRING" id="45351.A7SKE9"/>
<dbReference type="EnsemblMetazoa" id="EDO35846">
    <property type="protein sequence ID" value="EDO35846"/>
    <property type="gene ID" value="NEMVEDRAFT_v1g171563"/>
</dbReference>
<dbReference type="KEGG" id="nve:5507244"/>
<dbReference type="eggNOG" id="KOG0122">
    <property type="taxonomic scope" value="Eukaryota"/>
</dbReference>
<dbReference type="HOGENOM" id="CLU_034595_0_0_1"/>
<dbReference type="InParanoid" id="A7SKE9"/>
<dbReference type="OMA" id="ICQGDHF"/>
<dbReference type="PhylomeDB" id="A7SKE9"/>
<dbReference type="Proteomes" id="UP000001593">
    <property type="component" value="Unassembled WGS sequence"/>
</dbReference>
<dbReference type="GO" id="GO:0016282">
    <property type="term" value="C:eukaryotic 43S preinitiation complex"/>
    <property type="evidence" value="ECO:0007669"/>
    <property type="project" value="UniProtKB-UniRule"/>
</dbReference>
<dbReference type="GO" id="GO:0033290">
    <property type="term" value="C:eukaryotic 48S preinitiation complex"/>
    <property type="evidence" value="ECO:0007669"/>
    <property type="project" value="UniProtKB-UniRule"/>
</dbReference>
<dbReference type="GO" id="GO:0005852">
    <property type="term" value="C:eukaryotic translation initiation factor 3 complex"/>
    <property type="evidence" value="ECO:0007669"/>
    <property type="project" value="UniProtKB-UniRule"/>
</dbReference>
<dbReference type="GO" id="GO:0003723">
    <property type="term" value="F:RNA binding"/>
    <property type="evidence" value="ECO:0007669"/>
    <property type="project" value="UniProtKB-UniRule"/>
</dbReference>
<dbReference type="GO" id="GO:0003743">
    <property type="term" value="F:translation initiation factor activity"/>
    <property type="evidence" value="ECO:0007669"/>
    <property type="project" value="UniProtKB-UniRule"/>
</dbReference>
<dbReference type="GO" id="GO:0001732">
    <property type="term" value="P:formation of cytoplasmic translation initiation complex"/>
    <property type="evidence" value="ECO:0007669"/>
    <property type="project" value="UniProtKB-UniRule"/>
</dbReference>
<dbReference type="CDD" id="cd12933">
    <property type="entry name" value="eIF3G"/>
    <property type="match status" value="1"/>
</dbReference>
<dbReference type="CDD" id="cd12408">
    <property type="entry name" value="RRM_eIF3G_like"/>
    <property type="match status" value="1"/>
</dbReference>
<dbReference type="FunFam" id="3.30.70.330:FF:000893">
    <property type="entry name" value="Eukaryotic translation initiation factor 3 subunit G"/>
    <property type="match status" value="1"/>
</dbReference>
<dbReference type="Gene3D" id="3.30.70.330">
    <property type="match status" value="1"/>
</dbReference>
<dbReference type="HAMAP" id="MF_03006">
    <property type="entry name" value="eIF3g"/>
    <property type="match status" value="1"/>
</dbReference>
<dbReference type="InterPro" id="IPR017334">
    <property type="entry name" value="eIF3_g"/>
</dbReference>
<dbReference type="InterPro" id="IPR024675">
    <property type="entry name" value="eIF3g_N"/>
</dbReference>
<dbReference type="InterPro" id="IPR034240">
    <property type="entry name" value="eIF3G_RRM"/>
</dbReference>
<dbReference type="InterPro" id="IPR012677">
    <property type="entry name" value="Nucleotide-bd_a/b_plait_sf"/>
</dbReference>
<dbReference type="InterPro" id="IPR035979">
    <property type="entry name" value="RBD_domain_sf"/>
</dbReference>
<dbReference type="InterPro" id="IPR000504">
    <property type="entry name" value="RRM_dom"/>
</dbReference>
<dbReference type="PANTHER" id="PTHR10352">
    <property type="entry name" value="EUKARYOTIC TRANSLATION INITIATION FACTOR 3 SUBUNIT G"/>
    <property type="match status" value="1"/>
</dbReference>
<dbReference type="Pfam" id="PF12353">
    <property type="entry name" value="eIF3g"/>
    <property type="match status" value="1"/>
</dbReference>
<dbReference type="Pfam" id="PF00076">
    <property type="entry name" value="RRM_1"/>
    <property type="match status" value="1"/>
</dbReference>
<dbReference type="PIRSF" id="PIRSF037949">
    <property type="entry name" value="Transl_init_eIF-3_RNA-bind"/>
    <property type="match status" value="1"/>
</dbReference>
<dbReference type="SMART" id="SM00360">
    <property type="entry name" value="RRM"/>
    <property type="match status" value="1"/>
</dbReference>
<dbReference type="SUPFAM" id="SSF54928">
    <property type="entry name" value="RNA-binding domain, RBD"/>
    <property type="match status" value="1"/>
</dbReference>
<dbReference type="PROSITE" id="PS50102">
    <property type="entry name" value="RRM"/>
    <property type="match status" value="1"/>
</dbReference>
<keyword id="KW-0963">Cytoplasm</keyword>
<keyword id="KW-0396">Initiation factor</keyword>
<keyword id="KW-0648">Protein biosynthesis</keyword>
<keyword id="KW-1185">Reference proteome</keyword>
<keyword id="KW-0694">RNA-binding</keyword>
<sequence>MPSADNDTDEKPSWADLVDEAGETGLTGQIPPSSEVREGENKIVTEYKRDDEGKLQKIITTYRVETRRVAKEIAKRKLWKKFGDSKNDKPGPNKTTTNVCDDVFLILTSNKENPDATEEDPLKKLSGQKIVQCRICKGDHWTTKCPYKDQLEVIHQQLKEDDGSGQPGTPPSEPANPAAASTSGKYVAPGLRDGANRRGETMPSRSQRDETATIRVTNLSEETRESDLQELFRPLGPISRIFLAKDKFTNQSKGFAFINFVHREDAARAIEVLSGFGYDHLILNVEWAKPSTQQ</sequence>
<protein>
    <recommendedName>
        <fullName evidence="1">Eukaryotic translation initiation factor 3 subunit G</fullName>
        <shortName evidence="1">eIF3g</shortName>
    </recommendedName>
    <alternativeName>
        <fullName evidence="1">Eukaryotic translation initiation factor 3 RNA-binding subunit</fullName>
        <shortName evidence="1">eIF-3 RNA-binding subunit</shortName>
    </alternativeName>
    <alternativeName>
        <fullName evidence="1">Eukaryotic translation initiation factor 3 subunit 4</fullName>
    </alternativeName>
</protein>
<proteinExistence type="inferred from homology"/>
<evidence type="ECO:0000255" key="1">
    <source>
        <dbReference type="HAMAP-Rule" id="MF_03006"/>
    </source>
</evidence>
<evidence type="ECO:0000256" key="2">
    <source>
        <dbReference type="SAM" id="MobiDB-lite"/>
    </source>
</evidence>
<organism>
    <name type="scientific">Nematostella vectensis</name>
    <name type="common">Starlet sea anemone</name>
    <dbReference type="NCBI Taxonomy" id="45351"/>
    <lineage>
        <taxon>Eukaryota</taxon>
        <taxon>Metazoa</taxon>
        <taxon>Cnidaria</taxon>
        <taxon>Anthozoa</taxon>
        <taxon>Hexacorallia</taxon>
        <taxon>Actiniaria</taxon>
        <taxon>Edwardsiidae</taxon>
        <taxon>Nematostella</taxon>
    </lineage>
</organism>